<feature type="chain" id="PRO_0000416209" description="7-carboxy-7-deazaguanine synthase">
    <location>
        <begin position="1"/>
        <end position="212"/>
    </location>
</feature>
<feature type="domain" description="Radical SAM core" evidence="2">
    <location>
        <begin position="28"/>
        <end position="212"/>
    </location>
</feature>
<feature type="binding site" evidence="1">
    <location>
        <begin position="22"/>
        <end position="24"/>
    </location>
    <ligand>
        <name>substrate</name>
    </ligand>
</feature>
<feature type="binding site" evidence="1">
    <location>
        <position position="37"/>
    </location>
    <ligand>
        <name>substrate</name>
    </ligand>
</feature>
<feature type="binding site" evidence="1">
    <location>
        <position position="41"/>
    </location>
    <ligand>
        <name>[4Fe-4S] cluster</name>
        <dbReference type="ChEBI" id="CHEBI:49883"/>
        <note>4Fe-4S-S-AdoMet</note>
    </ligand>
</feature>
<feature type="binding site" evidence="1">
    <location>
        <position position="45"/>
    </location>
    <ligand>
        <name>[4Fe-4S] cluster</name>
        <dbReference type="ChEBI" id="CHEBI:49883"/>
        <note>4Fe-4S-S-AdoMet</note>
    </ligand>
</feature>
<feature type="binding site" evidence="1">
    <location>
        <position position="48"/>
    </location>
    <ligand>
        <name>[4Fe-4S] cluster</name>
        <dbReference type="ChEBI" id="CHEBI:49883"/>
        <note>4Fe-4S-S-AdoMet</note>
    </ligand>
</feature>
<feature type="binding site" evidence="1">
    <location>
        <position position="50"/>
    </location>
    <ligand>
        <name>Mg(2+)</name>
        <dbReference type="ChEBI" id="CHEBI:18420"/>
    </ligand>
</feature>
<feature type="binding site" evidence="1">
    <location>
        <position position="78"/>
    </location>
    <ligand>
        <name>substrate</name>
    </ligand>
</feature>
<feature type="binding site" evidence="1">
    <location>
        <position position="80"/>
    </location>
    <ligand>
        <name>S-adenosyl-L-methionine</name>
        <dbReference type="ChEBI" id="CHEBI:59789"/>
    </ligand>
</feature>
<feature type="binding site" evidence="1">
    <location>
        <begin position="122"/>
        <end position="124"/>
    </location>
    <ligand>
        <name>S-adenosyl-L-methionine</name>
        <dbReference type="ChEBI" id="CHEBI:59789"/>
    </ligand>
</feature>
<dbReference type="EC" id="4.3.99.3" evidence="1"/>
<dbReference type="EMBL" id="AE002098">
    <property type="protein sequence ID" value="AAF40959.1"/>
    <property type="molecule type" value="Genomic_DNA"/>
</dbReference>
<dbReference type="PIR" id="A81190">
    <property type="entry name" value="A81190"/>
</dbReference>
<dbReference type="RefSeq" id="NP_273574.1">
    <property type="nucleotide sequence ID" value="NC_003112.2"/>
</dbReference>
<dbReference type="RefSeq" id="WP_002225593.1">
    <property type="nucleotide sequence ID" value="NC_003112.2"/>
</dbReference>
<dbReference type="SMR" id="Q9K0Q5"/>
<dbReference type="FunCoup" id="Q9K0Q5">
    <property type="interactions" value="119"/>
</dbReference>
<dbReference type="STRING" id="122586.NMB0529"/>
<dbReference type="PaxDb" id="122586-NMB0529"/>
<dbReference type="DNASU" id="902644"/>
<dbReference type="KEGG" id="nme:NMB0529"/>
<dbReference type="PATRIC" id="fig|122586.8.peg.672"/>
<dbReference type="HOGENOM" id="CLU_066739_0_0_4"/>
<dbReference type="InParanoid" id="Q9K0Q5"/>
<dbReference type="OrthoDB" id="9792276at2"/>
<dbReference type="UniPathway" id="UPA00391"/>
<dbReference type="Proteomes" id="UP000000425">
    <property type="component" value="Chromosome"/>
</dbReference>
<dbReference type="GO" id="GO:0051539">
    <property type="term" value="F:4 iron, 4 sulfur cluster binding"/>
    <property type="evidence" value="ECO:0007669"/>
    <property type="project" value="UniProtKB-UniRule"/>
</dbReference>
<dbReference type="GO" id="GO:0016840">
    <property type="term" value="F:carbon-nitrogen lyase activity"/>
    <property type="evidence" value="ECO:0007669"/>
    <property type="project" value="UniProtKB-UniRule"/>
</dbReference>
<dbReference type="GO" id="GO:0000287">
    <property type="term" value="F:magnesium ion binding"/>
    <property type="evidence" value="ECO:0007669"/>
    <property type="project" value="UniProtKB-UniRule"/>
</dbReference>
<dbReference type="GO" id="GO:1904047">
    <property type="term" value="F:S-adenosyl-L-methionine binding"/>
    <property type="evidence" value="ECO:0007669"/>
    <property type="project" value="UniProtKB-UniRule"/>
</dbReference>
<dbReference type="GO" id="GO:0008616">
    <property type="term" value="P:queuosine biosynthetic process"/>
    <property type="evidence" value="ECO:0007669"/>
    <property type="project" value="UniProtKB-UniRule"/>
</dbReference>
<dbReference type="CDD" id="cd01335">
    <property type="entry name" value="Radical_SAM"/>
    <property type="match status" value="1"/>
</dbReference>
<dbReference type="Gene3D" id="3.20.20.70">
    <property type="entry name" value="Aldolase class I"/>
    <property type="match status" value="1"/>
</dbReference>
<dbReference type="HAMAP" id="MF_00917">
    <property type="entry name" value="QueE"/>
    <property type="match status" value="1"/>
</dbReference>
<dbReference type="InterPro" id="IPR024924">
    <property type="entry name" value="7-CO-7-deazaguanine_synth-like"/>
</dbReference>
<dbReference type="InterPro" id="IPR013785">
    <property type="entry name" value="Aldolase_TIM"/>
</dbReference>
<dbReference type="InterPro" id="IPR007197">
    <property type="entry name" value="rSAM"/>
</dbReference>
<dbReference type="PANTHER" id="PTHR42836">
    <property type="entry name" value="7-CARBOXY-7-DEAZAGUANINE SYNTHASE"/>
    <property type="match status" value="1"/>
</dbReference>
<dbReference type="PANTHER" id="PTHR42836:SF1">
    <property type="entry name" value="7-CARBOXY-7-DEAZAGUANINE SYNTHASE"/>
    <property type="match status" value="1"/>
</dbReference>
<dbReference type="Pfam" id="PF04055">
    <property type="entry name" value="Radical_SAM"/>
    <property type="match status" value="1"/>
</dbReference>
<dbReference type="PIRSF" id="PIRSF000370">
    <property type="entry name" value="QueE"/>
    <property type="match status" value="1"/>
</dbReference>
<dbReference type="SFLD" id="SFLDS00029">
    <property type="entry name" value="Radical_SAM"/>
    <property type="match status" value="1"/>
</dbReference>
<dbReference type="SUPFAM" id="SSF102114">
    <property type="entry name" value="Radical SAM enzymes"/>
    <property type="match status" value="1"/>
</dbReference>
<dbReference type="PROSITE" id="PS51918">
    <property type="entry name" value="RADICAL_SAM"/>
    <property type="match status" value="1"/>
</dbReference>
<reference key="1">
    <citation type="journal article" date="2000" name="Science">
        <title>Complete genome sequence of Neisseria meningitidis serogroup B strain MC58.</title>
        <authorList>
            <person name="Tettelin H."/>
            <person name="Saunders N.J."/>
            <person name="Heidelberg J.F."/>
            <person name="Jeffries A.C."/>
            <person name="Nelson K.E."/>
            <person name="Eisen J.A."/>
            <person name="Ketchum K.A."/>
            <person name="Hood D.W."/>
            <person name="Peden J.F."/>
            <person name="Dodson R.J."/>
            <person name="Nelson W.C."/>
            <person name="Gwinn M.L."/>
            <person name="DeBoy R.T."/>
            <person name="Peterson J.D."/>
            <person name="Hickey E.K."/>
            <person name="Haft D.H."/>
            <person name="Salzberg S.L."/>
            <person name="White O."/>
            <person name="Fleischmann R.D."/>
            <person name="Dougherty B.A."/>
            <person name="Mason T.M."/>
            <person name="Ciecko A."/>
            <person name="Parksey D.S."/>
            <person name="Blair E."/>
            <person name="Cittone H."/>
            <person name="Clark E.B."/>
            <person name="Cotton M.D."/>
            <person name="Utterback T.R."/>
            <person name="Khouri H.M."/>
            <person name="Qin H."/>
            <person name="Vamathevan J.J."/>
            <person name="Gill J."/>
            <person name="Scarlato V."/>
            <person name="Masignani V."/>
            <person name="Pizza M."/>
            <person name="Grandi G."/>
            <person name="Sun L."/>
            <person name="Smith H.O."/>
            <person name="Fraser C.M."/>
            <person name="Moxon E.R."/>
            <person name="Rappuoli R."/>
            <person name="Venter J.C."/>
        </authorList>
    </citation>
    <scope>NUCLEOTIDE SEQUENCE [LARGE SCALE GENOMIC DNA]</scope>
    <source>
        <strain>ATCC BAA-335 / MC58</strain>
    </source>
</reference>
<name>QUEE_NEIMB</name>
<accession>Q9K0Q5</accession>
<protein>
    <recommendedName>
        <fullName evidence="1">7-carboxy-7-deazaguanine synthase</fullName>
        <shortName evidence="1">CDG synthase</shortName>
        <ecNumber evidence="1">4.3.99.3</ecNumber>
    </recommendedName>
    <alternativeName>
        <fullName evidence="1">Queuosine biosynthesis protein QueE</fullName>
    </alternativeName>
</protein>
<gene>
    <name evidence="1" type="primary">queE</name>
    <name type="ordered locus">NMB0529</name>
</gene>
<comment type="function">
    <text evidence="1">Catalyzes the complex heterocyclic radical-mediated conversion of 6-carboxy-5,6,7,8-tetrahydropterin (CPH4) to 7-carboxy-7-deazaguanine (CDG), a step common to the biosynthetic pathways of all 7-deazapurine-containing compounds.</text>
</comment>
<comment type="catalytic activity">
    <reaction evidence="1">
        <text>6-carboxy-5,6,7,8-tetrahydropterin + H(+) = 7-carboxy-7-deazaguanine + NH4(+)</text>
        <dbReference type="Rhea" id="RHEA:27974"/>
        <dbReference type="ChEBI" id="CHEBI:15378"/>
        <dbReference type="ChEBI" id="CHEBI:28938"/>
        <dbReference type="ChEBI" id="CHEBI:61032"/>
        <dbReference type="ChEBI" id="CHEBI:61036"/>
        <dbReference type="EC" id="4.3.99.3"/>
    </reaction>
</comment>
<comment type="cofactor">
    <cofactor evidence="1">
        <name>[4Fe-4S] cluster</name>
        <dbReference type="ChEBI" id="CHEBI:49883"/>
    </cofactor>
    <text evidence="1">Binds 1 [4Fe-4S] cluster. The cluster is coordinated with 3 cysteines and an exchangeable S-adenosyl-L-methionine.</text>
</comment>
<comment type="cofactor">
    <cofactor evidence="1">
        <name>S-adenosyl-L-methionine</name>
        <dbReference type="ChEBI" id="CHEBI:59789"/>
    </cofactor>
    <text evidence="1">Binds 1 S-adenosyl-L-methionine per subunit.</text>
</comment>
<comment type="cofactor">
    <cofactor evidence="1">
        <name>Mg(2+)</name>
        <dbReference type="ChEBI" id="CHEBI:18420"/>
    </cofactor>
</comment>
<comment type="pathway">
    <text evidence="1">Purine metabolism; 7-cyano-7-deazaguanine biosynthesis.</text>
</comment>
<comment type="subunit">
    <text evidence="1">Homodimer.</text>
</comment>
<comment type="similarity">
    <text evidence="1">Belongs to the radical SAM superfamily. 7-carboxy-7-deazaguanine synthase family.</text>
</comment>
<proteinExistence type="inferred from homology"/>
<organism>
    <name type="scientific">Neisseria meningitidis serogroup B (strain ATCC BAA-335 / MC58)</name>
    <dbReference type="NCBI Taxonomy" id="122586"/>
    <lineage>
        <taxon>Bacteria</taxon>
        <taxon>Pseudomonadati</taxon>
        <taxon>Pseudomonadota</taxon>
        <taxon>Betaproteobacteria</taxon>
        <taxon>Neisseriales</taxon>
        <taxon>Neisseriaceae</taxon>
        <taxon>Neisseria</taxon>
    </lineage>
</organism>
<evidence type="ECO:0000255" key="1">
    <source>
        <dbReference type="HAMAP-Rule" id="MF_00917"/>
    </source>
</evidence>
<evidence type="ECO:0000255" key="2">
    <source>
        <dbReference type="PROSITE-ProRule" id="PRU01266"/>
    </source>
</evidence>
<sequence>MKKINVAPENPQYRIVEIFESLQGEGWNTGMPAVFVRLGKCNLACGWCDTDYLTFGMMGLSDILGRLKTYAARNIIITGGEPTIQPHLDMLLDTLKAEGYFLCLETNGLNPAPPQIDYVATSPKACYAAKYENSCIETADEVRIVADGDVLAFCENMERKIRAHHYYLSPCEQDGAMNIYDTIRQIGILNSRPDASVHWQLSVQTHKWAGIE</sequence>
<keyword id="KW-0004">4Fe-4S</keyword>
<keyword id="KW-0408">Iron</keyword>
<keyword id="KW-0411">Iron-sulfur</keyword>
<keyword id="KW-0456">Lyase</keyword>
<keyword id="KW-0460">Magnesium</keyword>
<keyword id="KW-0479">Metal-binding</keyword>
<keyword id="KW-0671">Queuosine biosynthesis</keyword>
<keyword id="KW-1185">Reference proteome</keyword>
<keyword id="KW-0949">S-adenosyl-L-methionine</keyword>